<reference key="1">
    <citation type="journal article" date="2004" name="Proc. Natl. Acad. Sci. U.S.A.">
        <title>Complete genomes of two clinical Staphylococcus aureus strains: evidence for the rapid evolution of virulence and drug resistance.</title>
        <authorList>
            <person name="Holden M.T.G."/>
            <person name="Feil E.J."/>
            <person name="Lindsay J.A."/>
            <person name="Peacock S.J."/>
            <person name="Day N.P.J."/>
            <person name="Enright M.C."/>
            <person name="Foster T.J."/>
            <person name="Moore C.E."/>
            <person name="Hurst L."/>
            <person name="Atkin R."/>
            <person name="Barron A."/>
            <person name="Bason N."/>
            <person name="Bentley S.D."/>
            <person name="Chillingworth C."/>
            <person name="Chillingworth T."/>
            <person name="Churcher C."/>
            <person name="Clark L."/>
            <person name="Corton C."/>
            <person name="Cronin A."/>
            <person name="Doggett J."/>
            <person name="Dowd L."/>
            <person name="Feltwell T."/>
            <person name="Hance Z."/>
            <person name="Harris B."/>
            <person name="Hauser H."/>
            <person name="Holroyd S."/>
            <person name="Jagels K."/>
            <person name="James K.D."/>
            <person name="Lennard N."/>
            <person name="Line A."/>
            <person name="Mayes R."/>
            <person name="Moule S."/>
            <person name="Mungall K."/>
            <person name="Ormond D."/>
            <person name="Quail M.A."/>
            <person name="Rabbinowitsch E."/>
            <person name="Rutherford K.M."/>
            <person name="Sanders M."/>
            <person name="Sharp S."/>
            <person name="Simmonds M."/>
            <person name="Stevens K."/>
            <person name="Whitehead S."/>
            <person name="Barrell B.G."/>
            <person name="Spratt B.G."/>
            <person name="Parkhill J."/>
        </authorList>
    </citation>
    <scope>NUCLEOTIDE SEQUENCE [LARGE SCALE GENOMIC DNA]</scope>
    <source>
        <strain>MRSA252</strain>
    </source>
</reference>
<evidence type="ECO:0000255" key="1">
    <source>
        <dbReference type="HAMAP-Rule" id="MF_00602"/>
    </source>
</evidence>
<comment type="function">
    <text evidence="1">Catalyzes the specific phosphorylation of arginine residues in proteins.</text>
</comment>
<comment type="catalytic activity">
    <reaction evidence="1">
        <text>L-arginyl-[protein] + ATP = N(omega)-phospho-L-arginyl-[protein] + ADP + H(+)</text>
        <dbReference type="Rhea" id="RHEA:43384"/>
        <dbReference type="Rhea" id="RHEA-COMP:10532"/>
        <dbReference type="Rhea" id="RHEA-COMP:10533"/>
        <dbReference type="ChEBI" id="CHEBI:15378"/>
        <dbReference type="ChEBI" id="CHEBI:29965"/>
        <dbReference type="ChEBI" id="CHEBI:30616"/>
        <dbReference type="ChEBI" id="CHEBI:83226"/>
        <dbReference type="ChEBI" id="CHEBI:456216"/>
        <dbReference type="EC" id="2.7.14.1"/>
    </reaction>
</comment>
<comment type="similarity">
    <text evidence="1">Belongs to the ATP:guanido phosphotransferase family.</text>
</comment>
<organism>
    <name type="scientific">Staphylococcus aureus (strain MRSA252)</name>
    <dbReference type="NCBI Taxonomy" id="282458"/>
    <lineage>
        <taxon>Bacteria</taxon>
        <taxon>Bacillati</taxon>
        <taxon>Bacillota</taxon>
        <taxon>Bacilli</taxon>
        <taxon>Bacillales</taxon>
        <taxon>Staphylococcaceae</taxon>
        <taxon>Staphylococcus</taxon>
    </lineage>
</organism>
<dbReference type="EC" id="2.7.14.1" evidence="1"/>
<dbReference type="EMBL" id="BX571856">
    <property type="protein sequence ID" value="CAG39549.1"/>
    <property type="molecule type" value="Genomic_DNA"/>
</dbReference>
<dbReference type="RefSeq" id="WP_000149503.1">
    <property type="nucleotide sequence ID" value="NC_002952.2"/>
</dbReference>
<dbReference type="SMR" id="Q6GJE5"/>
<dbReference type="KEGG" id="sar:SAR0527"/>
<dbReference type="HOGENOM" id="CLU_066591_1_0_9"/>
<dbReference type="Proteomes" id="UP000000596">
    <property type="component" value="Chromosome"/>
</dbReference>
<dbReference type="GO" id="GO:0005615">
    <property type="term" value="C:extracellular space"/>
    <property type="evidence" value="ECO:0007669"/>
    <property type="project" value="TreeGrafter"/>
</dbReference>
<dbReference type="GO" id="GO:0005524">
    <property type="term" value="F:ATP binding"/>
    <property type="evidence" value="ECO:0007669"/>
    <property type="project" value="UniProtKB-KW"/>
</dbReference>
<dbReference type="GO" id="GO:0004111">
    <property type="term" value="F:creatine kinase activity"/>
    <property type="evidence" value="ECO:0007669"/>
    <property type="project" value="InterPro"/>
</dbReference>
<dbReference type="GO" id="GO:0004672">
    <property type="term" value="F:protein kinase activity"/>
    <property type="evidence" value="ECO:0007669"/>
    <property type="project" value="UniProtKB-UniRule"/>
</dbReference>
<dbReference type="GO" id="GO:0046314">
    <property type="term" value="P:phosphocreatine biosynthetic process"/>
    <property type="evidence" value="ECO:0007669"/>
    <property type="project" value="InterPro"/>
</dbReference>
<dbReference type="CDD" id="cd07930">
    <property type="entry name" value="bacterial_phosphagen_kinase"/>
    <property type="match status" value="1"/>
</dbReference>
<dbReference type="FunFam" id="3.30.590.10:FF:000007">
    <property type="entry name" value="Protein-arginine kinase"/>
    <property type="match status" value="1"/>
</dbReference>
<dbReference type="Gene3D" id="3.30.590.10">
    <property type="entry name" value="Glutamine synthetase/guanido kinase, catalytic domain"/>
    <property type="match status" value="1"/>
</dbReference>
<dbReference type="HAMAP" id="MF_00602">
    <property type="entry name" value="Prot_Arg_kinase"/>
    <property type="match status" value="1"/>
</dbReference>
<dbReference type="InterPro" id="IPR023660">
    <property type="entry name" value="Arg_Kinase"/>
</dbReference>
<dbReference type="InterPro" id="IPR000749">
    <property type="entry name" value="ATP-guanido_PTrfase"/>
</dbReference>
<dbReference type="InterPro" id="IPR022415">
    <property type="entry name" value="ATP-guanido_PTrfase_AS"/>
</dbReference>
<dbReference type="InterPro" id="IPR022414">
    <property type="entry name" value="ATP-guanido_PTrfase_cat"/>
</dbReference>
<dbReference type="InterPro" id="IPR014746">
    <property type="entry name" value="Gln_synth/guanido_kin_cat_dom"/>
</dbReference>
<dbReference type="NCBIfam" id="NF002193">
    <property type="entry name" value="PRK01059.1-3"/>
    <property type="match status" value="1"/>
</dbReference>
<dbReference type="PANTHER" id="PTHR11547:SF38">
    <property type="entry name" value="ARGININE KINASE 1-RELATED"/>
    <property type="match status" value="1"/>
</dbReference>
<dbReference type="PANTHER" id="PTHR11547">
    <property type="entry name" value="ARGININE OR CREATINE KINASE"/>
    <property type="match status" value="1"/>
</dbReference>
<dbReference type="Pfam" id="PF00217">
    <property type="entry name" value="ATP-gua_Ptrans"/>
    <property type="match status" value="1"/>
</dbReference>
<dbReference type="SUPFAM" id="SSF55931">
    <property type="entry name" value="Glutamine synthetase/guanido kinase"/>
    <property type="match status" value="1"/>
</dbReference>
<dbReference type="PROSITE" id="PS00112">
    <property type="entry name" value="PHOSPHAGEN_KINASE"/>
    <property type="match status" value="1"/>
</dbReference>
<dbReference type="PROSITE" id="PS51510">
    <property type="entry name" value="PHOSPHAGEN_KINASE_C"/>
    <property type="match status" value="1"/>
</dbReference>
<keyword id="KW-0067">ATP-binding</keyword>
<keyword id="KW-0418">Kinase</keyword>
<keyword id="KW-0547">Nucleotide-binding</keyword>
<keyword id="KW-0808">Transferase</keyword>
<name>MCSB_STAAR</name>
<sequence length="335" mass="38610">MTHNIHDNISQWMKSNEETPIVMSSRIRLARNLENHVHPLMYATENDGFRVINEVQDALPNFELMRLDQMDQQSKMKMVAKHLISPELIKQPAAAVLVNDDESLSVMINEEDHIRIQAMGTDTTLQALYNQASSIDDELDRSLDISYDEQLGYLTTCPTNIGTGMRASVMLHLPGLSIMKRMTRIAQTINRFGYTIRGIYGEGSQVYGHTYQVSNQLTLGKSELEIIETLTEVVNQIIHEEKQIRQKLDTYNQLETQDRVFRSLGILQNCRMITMEEASYRLSEVKLGIDLNYIELQNFKFNELMVAIQSPFLLDEEDDKSVKEKRADILREHIK</sequence>
<protein>
    <recommendedName>
        <fullName evidence="1">Protein-arginine kinase</fullName>
        <ecNumber evidence="1">2.7.14.1</ecNumber>
    </recommendedName>
</protein>
<feature type="chain" id="PRO_0000212031" description="Protein-arginine kinase">
    <location>
        <begin position="1"/>
        <end position="335"/>
    </location>
</feature>
<feature type="domain" description="Phosphagen kinase C-terminal" evidence="1">
    <location>
        <begin position="21"/>
        <end position="244"/>
    </location>
</feature>
<feature type="binding site" evidence="1">
    <location>
        <begin position="24"/>
        <end position="28"/>
    </location>
    <ligand>
        <name>ATP</name>
        <dbReference type="ChEBI" id="CHEBI:30616"/>
    </ligand>
</feature>
<feature type="binding site" evidence="1">
    <location>
        <position position="82"/>
    </location>
    <ligand>
        <name>ATP</name>
        <dbReference type="ChEBI" id="CHEBI:30616"/>
    </ligand>
</feature>
<feature type="binding site" evidence="1">
    <location>
        <position position="115"/>
    </location>
    <ligand>
        <name>ATP</name>
        <dbReference type="ChEBI" id="CHEBI:30616"/>
    </ligand>
</feature>
<feature type="binding site" evidence="1">
    <location>
        <begin position="166"/>
        <end position="170"/>
    </location>
    <ligand>
        <name>ATP</name>
        <dbReference type="ChEBI" id="CHEBI:30616"/>
    </ligand>
</feature>
<feature type="binding site" evidence="1">
    <location>
        <begin position="197"/>
        <end position="202"/>
    </location>
    <ligand>
        <name>ATP</name>
        <dbReference type="ChEBI" id="CHEBI:30616"/>
    </ligand>
</feature>
<proteinExistence type="inferred from homology"/>
<accession>Q6GJE5</accession>
<gene>
    <name evidence="1" type="primary">mcsB</name>
    <name type="ordered locus">SAR0527</name>
</gene>